<evidence type="ECO:0000255" key="1">
    <source>
        <dbReference type="HAMAP-Rule" id="MF_00052"/>
    </source>
</evidence>
<evidence type="ECO:0000255" key="2">
    <source>
        <dbReference type="PROSITE-ProRule" id="PRU01319"/>
    </source>
</evidence>
<accession>A8M684</accession>
<protein>
    <recommendedName>
        <fullName evidence="1">Ribonuclease HII</fullName>
        <shortName evidence="1">RNase HII</shortName>
        <ecNumber evidence="1">3.1.26.4</ecNumber>
    </recommendedName>
</protein>
<organism>
    <name type="scientific">Salinispora arenicola (strain CNS-205)</name>
    <dbReference type="NCBI Taxonomy" id="391037"/>
    <lineage>
        <taxon>Bacteria</taxon>
        <taxon>Bacillati</taxon>
        <taxon>Actinomycetota</taxon>
        <taxon>Actinomycetes</taxon>
        <taxon>Micromonosporales</taxon>
        <taxon>Micromonosporaceae</taxon>
        <taxon>Salinispora</taxon>
    </lineage>
</organism>
<keyword id="KW-0963">Cytoplasm</keyword>
<keyword id="KW-0255">Endonuclease</keyword>
<keyword id="KW-0378">Hydrolase</keyword>
<keyword id="KW-0464">Manganese</keyword>
<keyword id="KW-0479">Metal-binding</keyword>
<keyword id="KW-0540">Nuclease</keyword>
<gene>
    <name evidence="1" type="primary">rnhB</name>
    <name type="ordered locus">Sare_1201</name>
</gene>
<dbReference type="EC" id="3.1.26.4" evidence="1"/>
<dbReference type="EMBL" id="CP000850">
    <property type="protein sequence ID" value="ABV97109.1"/>
    <property type="molecule type" value="Genomic_DNA"/>
</dbReference>
<dbReference type="SMR" id="A8M684"/>
<dbReference type="STRING" id="391037.Sare_1201"/>
<dbReference type="KEGG" id="saq:Sare_1201"/>
<dbReference type="PATRIC" id="fig|391037.6.peg.1220"/>
<dbReference type="eggNOG" id="COG0164">
    <property type="taxonomic scope" value="Bacteria"/>
</dbReference>
<dbReference type="HOGENOM" id="CLU_036532_1_0_11"/>
<dbReference type="OrthoDB" id="9803420at2"/>
<dbReference type="GO" id="GO:0005737">
    <property type="term" value="C:cytoplasm"/>
    <property type="evidence" value="ECO:0007669"/>
    <property type="project" value="UniProtKB-SubCell"/>
</dbReference>
<dbReference type="GO" id="GO:0032299">
    <property type="term" value="C:ribonuclease H2 complex"/>
    <property type="evidence" value="ECO:0007669"/>
    <property type="project" value="TreeGrafter"/>
</dbReference>
<dbReference type="GO" id="GO:0030145">
    <property type="term" value="F:manganese ion binding"/>
    <property type="evidence" value="ECO:0007669"/>
    <property type="project" value="UniProtKB-UniRule"/>
</dbReference>
<dbReference type="GO" id="GO:0003723">
    <property type="term" value="F:RNA binding"/>
    <property type="evidence" value="ECO:0007669"/>
    <property type="project" value="InterPro"/>
</dbReference>
<dbReference type="GO" id="GO:0004523">
    <property type="term" value="F:RNA-DNA hybrid ribonuclease activity"/>
    <property type="evidence" value="ECO:0007669"/>
    <property type="project" value="UniProtKB-UniRule"/>
</dbReference>
<dbReference type="GO" id="GO:0043137">
    <property type="term" value="P:DNA replication, removal of RNA primer"/>
    <property type="evidence" value="ECO:0007669"/>
    <property type="project" value="TreeGrafter"/>
</dbReference>
<dbReference type="GO" id="GO:0006298">
    <property type="term" value="P:mismatch repair"/>
    <property type="evidence" value="ECO:0007669"/>
    <property type="project" value="TreeGrafter"/>
</dbReference>
<dbReference type="CDD" id="cd07182">
    <property type="entry name" value="RNase_HII_bacteria_HII_like"/>
    <property type="match status" value="1"/>
</dbReference>
<dbReference type="Gene3D" id="3.30.420.10">
    <property type="entry name" value="Ribonuclease H-like superfamily/Ribonuclease H"/>
    <property type="match status" value="1"/>
</dbReference>
<dbReference type="HAMAP" id="MF_00052_B">
    <property type="entry name" value="RNase_HII_B"/>
    <property type="match status" value="1"/>
</dbReference>
<dbReference type="InterPro" id="IPR022898">
    <property type="entry name" value="RNase_HII"/>
</dbReference>
<dbReference type="InterPro" id="IPR001352">
    <property type="entry name" value="RNase_HII/HIII"/>
</dbReference>
<dbReference type="InterPro" id="IPR024567">
    <property type="entry name" value="RNase_HII/HIII_dom"/>
</dbReference>
<dbReference type="InterPro" id="IPR012337">
    <property type="entry name" value="RNaseH-like_sf"/>
</dbReference>
<dbReference type="InterPro" id="IPR036397">
    <property type="entry name" value="RNaseH_sf"/>
</dbReference>
<dbReference type="NCBIfam" id="NF000595">
    <property type="entry name" value="PRK00015.1-3"/>
    <property type="match status" value="1"/>
</dbReference>
<dbReference type="NCBIfam" id="NF000598">
    <property type="entry name" value="PRK00015.2-2"/>
    <property type="match status" value="1"/>
</dbReference>
<dbReference type="PANTHER" id="PTHR10954">
    <property type="entry name" value="RIBONUCLEASE H2 SUBUNIT A"/>
    <property type="match status" value="1"/>
</dbReference>
<dbReference type="PANTHER" id="PTHR10954:SF18">
    <property type="entry name" value="RIBONUCLEASE HII"/>
    <property type="match status" value="1"/>
</dbReference>
<dbReference type="Pfam" id="PF01351">
    <property type="entry name" value="RNase_HII"/>
    <property type="match status" value="1"/>
</dbReference>
<dbReference type="SUPFAM" id="SSF53098">
    <property type="entry name" value="Ribonuclease H-like"/>
    <property type="match status" value="1"/>
</dbReference>
<dbReference type="PROSITE" id="PS51975">
    <property type="entry name" value="RNASE_H_2"/>
    <property type="match status" value="1"/>
</dbReference>
<comment type="function">
    <text evidence="1">Endonuclease that specifically degrades the RNA of RNA-DNA hybrids.</text>
</comment>
<comment type="catalytic activity">
    <reaction evidence="1">
        <text>Endonucleolytic cleavage to 5'-phosphomonoester.</text>
        <dbReference type="EC" id="3.1.26.4"/>
    </reaction>
</comment>
<comment type="cofactor">
    <cofactor evidence="1">
        <name>Mn(2+)</name>
        <dbReference type="ChEBI" id="CHEBI:29035"/>
    </cofactor>
    <cofactor evidence="1">
        <name>Mg(2+)</name>
        <dbReference type="ChEBI" id="CHEBI:18420"/>
    </cofactor>
    <text evidence="1">Manganese or magnesium. Binds 1 divalent metal ion per monomer in the absence of substrate. May bind a second metal ion after substrate binding.</text>
</comment>
<comment type="subcellular location">
    <subcellularLocation>
        <location evidence="1">Cytoplasm</location>
    </subcellularLocation>
</comment>
<comment type="similarity">
    <text evidence="1">Belongs to the RNase HII family.</text>
</comment>
<proteinExistence type="inferred from homology"/>
<name>RNH2_SALAI</name>
<feature type="chain" id="PRO_0000334952" description="Ribonuclease HII">
    <location>
        <begin position="1"/>
        <end position="269"/>
    </location>
</feature>
<feature type="domain" description="RNase H type-2" evidence="2">
    <location>
        <begin position="28"/>
        <end position="222"/>
    </location>
</feature>
<feature type="binding site" evidence="1">
    <location>
        <position position="34"/>
    </location>
    <ligand>
        <name>a divalent metal cation</name>
        <dbReference type="ChEBI" id="CHEBI:60240"/>
    </ligand>
</feature>
<feature type="binding site" evidence="1">
    <location>
        <position position="35"/>
    </location>
    <ligand>
        <name>a divalent metal cation</name>
        <dbReference type="ChEBI" id="CHEBI:60240"/>
    </ligand>
</feature>
<feature type="binding site" evidence="1">
    <location>
        <position position="128"/>
    </location>
    <ligand>
        <name>a divalent metal cation</name>
        <dbReference type="ChEBI" id="CHEBI:60240"/>
    </ligand>
</feature>
<sequence length="269" mass="28286">MLTPPRTVVRRDGGLYALERALQRRGFRHVAGADEAGRGACAGPLVAAAAVLPEGRRGEIDGLADSKLLTPASRERVYAEVVARALAYAVVVIPAAEVDLRGLHVCNLAAMRRALASLATAPEYVLTDGFGVDGLDVPGLAVWKGDRVAACVAAASVLAKVTRDRIMVELDTTFPGYGFAEHKGYITAEHSAALRERGPCPEHRFSYVNVATVSGRRGAPPRARRPLVVGLDEPMERSGAVEGTVGVALGERPWAAVSVGNDVAMEGGM</sequence>
<reference key="1">
    <citation type="submission" date="2007-10" db="EMBL/GenBank/DDBJ databases">
        <title>Complete sequence of Salinispora arenicola CNS-205.</title>
        <authorList>
            <consortium name="US DOE Joint Genome Institute"/>
            <person name="Copeland A."/>
            <person name="Lucas S."/>
            <person name="Lapidus A."/>
            <person name="Barry K."/>
            <person name="Glavina del Rio T."/>
            <person name="Dalin E."/>
            <person name="Tice H."/>
            <person name="Pitluck S."/>
            <person name="Foster B."/>
            <person name="Schmutz J."/>
            <person name="Larimer F."/>
            <person name="Land M."/>
            <person name="Hauser L."/>
            <person name="Kyrpides N."/>
            <person name="Ivanova N."/>
            <person name="Jensen P.R."/>
            <person name="Moore B.S."/>
            <person name="Penn K."/>
            <person name="Jenkins C."/>
            <person name="Udwary D."/>
            <person name="Xiang L."/>
            <person name="Gontang E."/>
            <person name="Richardson P."/>
        </authorList>
    </citation>
    <scope>NUCLEOTIDE SEQUENCE [LARGE SCALE GENOMIC DNA]</scope>
    <source>
        <strain>CNS-205</strain>
    </source>
</reference>